<name>DDL_TROWT</name>
<keyword id="KW-0067">ATP-binding</keyword>
<keyword id="KW-0133">Cell shape</keyword>
<keyword id="KW-0961">Cell wall biogenesis/degradation</keyword>
<keyword id="KW-0963">Cytoplasm</keyword>
<keyword id="KW-0436">Ligase</keyword>
<keyword id="KW-0460">Magnesium</keyword>
<keyword id="KW-0464">Manganese</keyword>
<keyword id="KW-0479">Metal-binding</keyword>
<keyword id="KW-0547">Nucleotide-binding</keyword>
<keyword id="KW-0573">Peptidoglycan synthesis</keyword>
<keyword id="KW-1185">Reference proteome</keyword>
<reference key="1">
    <citation type="journal article" date="2003" name="Genome Res.">
        <title>Tropheryma whipplei twist: a human pathogenic Actinobacteria with a reduced genome.</title>
        <authorList>
            <person name="Raoult D."/>
            <person name="Ogata H."/>
            <person name="Audic S."/>
            <person name="Robert C."/>
            <person name="Suhre K."/>
            <person name="Drancourt M."/>
            <person name="Claverie J.-M."/>
        </authorList>
    </citation>
    <scope>NUCLEOTIDE SEQUENCE [LARGE SCALE GENOMIC DNA]</scope>
    <source>
        <strain>Twist</strain>
    </source>
</reference>
<evidence type="ECO:0000250" key="1"/>
<evidence type="ECO:0000255" key="2">
    <source>
        <dbReference type="HAMAP-Rule" id="MF_00047"/>
    </source>
</evidence>
<dbReference type="EC" id="6.3.2.4" evidence="2"/>
<dbReference type="EMBL" id="AE014184">
    <property type="protein sequence ID" value="AAO44602.1"/>
    <property type="molecule type" value="Genomic_DNA"/>
</dbReference>
<dbReference type="RefSeq" id="WP_011102617.1">
    <property type="nucleotide sequence ID" value="NC_004572.3"/>
</dbReference>
<dbReference type="SMR" id="Q83G28"/>
<dbReference type="STRING" id="203267.TWT_505"/>
<dbReference type="KEGG" id="twh:TWT_505"/>
<dbReference type="eggNOG" id="COG1181">
    <property type="taxonomic scope" value="Bacteria"/>
</dbReference>
<dbReference type="HOGENOM" id="CLU_039268_0_0_11"/>
<dbReference type="OrthoDB" id="9813261at2"/>
<dbReference type="UniPathway" id="UPA00219"/>
<dbReference type="Proteomes" id="UP000002200">
    <property type="component" value="Chromosome"/>
</dbReference>
<dbReference type="GO" id="GO:0005829">
    <property type="term" value="C:cytosol"/>
    <property type="evidence" value="ECO:0007669"/>
    <property type="project" value="TreeGrafter"/>
</dbReference>
<dbReference type="GO" id="GO:0005524">
    <property type="term" value="F:ATP binding"/>
    <property type="evidence" value="ECO:0007669"/>
    <property type="project" value="UniProtKB-KW"/>
</dbReference>
<dbReference type="GO" id="GO:0008716">
    <property type="term" value="F:D-alanine-D-alanine ligase activity"/>
    <property type="evidence" value="ECO:0007669"/>
    <property type="project" value="UniProtKB-UniRule"/>
</dbReference>
<dbReference type="GO" id="GO:0046872">
    <property type="term" value="F:metal ion binding"/>
    <property type="evidence" value="ECO:0007669"/>
    <property type="project" value="UniProtKB-KW"/>
</dbReference>
<dbReference type="GO" id="GO:0071555">
    <property type="term" value="P:cell wall organization"/>
    <property type="evidence" value="ECO:0007669"/>
    <property type="project" value="UniProtKB-KW"/>
</dbReference>
<dbReference type="GO" id="GO:0009252">
    <property type="term" value="P:peptidoglycan biosynthetic process"/>
    <property type="evidence" value="ECO:0007669"/>
    <property type="project" value="UniProtKB-UniRule"/>
</dbReference>
<dbReference type="GO" id="GO:0008360">
    <property type="term" value="P:regulation of cell shape"/>
    <property type="evidence" value="ECO:0007669"/>
    <property type="project" value="UniProtKB-KW"/>
</dbReference>
<dbReference type="Gene3D" id="3.40.50.20">
    <property type="match status" value="1"/>
</dbReference>
<dbReference type="Gene3D" id="3.30.1490.20">
    <property type="entry name" value="ATP-grasp fold, A domain"/>
    <property type="match status" value="1"/>
</dbReference>
<dbReference type="Gene3D" id="3.30.470.20">
    <property type="entry name" value="ATP-grasp fold, B domain"/>
    <property type="match status" value="1"/>
</dbReference>
<dbReference type="HAMAP" id="MF_00047">
    <property type="entry name" value="Dala_Dala_lig"/>
    <property type="match status" value="1"/>
</dbReference>
<dbReference type="InterPro" id="IPR011761">
    <property type="entry name" value="ATP-grasp"/>
</dbReference>
<dbReference type="InterPro" id="IPR013815">
    <property type="entry name" value="ATP_grasp_subdomain_1"/>
</dbReference>
<dbReference type="InterPro" id="IPR000291">
    <property type="entry name" value="D-Ala_lig_Van_CS"/>
</dbReference>
<dbReference type="InterPro" id="IPR005905">
    <property type="entry name" value="D_ala_D_ala"/>
</dbReference>
<dbReference type="InterPro" id="IPR011095">
    <property type="entry name" value="Dala_Dala_lig_C"/>
</dbReference>
<dbReference type="InterPro" id="IPR011127">
    <property type="entry name" value="Dala_Dala_lig_N"/>
</dbReference>
<dbReference type="InterPro" id="IPR016185">
    <property type="entry name" value="PreATP-grasp_dom_sf"/>
</dbReference>
<dbReference type="NCBIfam" id="TIGR01205">
    <property type="entry name" value="D_ala_D_alaTIGR"/>
    <property type="match status" value="1"/>
</dbReference>
<dbReference type="NCBIfam" id="NF002528">
    <property type="entry name" value="PRK01966.1-4"/>
    <property type="match status" value="1"/>
</dbReference>
<dbReference type="PANTHER" id="PTHR23132">
    <property type="entry name" value="D-ALANINE--D-ALANINE LIGASE"/>
    <property type="match status" value="1"/>
</dbReference>
<dbReference type="PANTHER" id="PTHR23132:SF25">
    <property type="entry name" value="D-ALANINE--D-ALANINE LIGASE A"/>
    <property type="match status" value="1"/>
</dbReference>
<dbReference type="Pfam" id="PF07478">
    <property type="entry name" value="Dala_Dala_lig_C"/>
    <property type="match status" value="1"/>
</dbReference>
<dbReference type="Pfam" id="PF01820">
    <property type="entry name" value="Dala_Dala_lig_N"/>
    <property type="match status" value="1"/>
</dbReference>
<dbReference type="PIRSF" id="PIRSF039102">
    <property type="entry name" value="Ddl/VanB"/>
    <property type="match status" value="1"/>
</dbReference>
<dbReference type="SUPFAM" id="SSF56059">
    <property type="entry name" value="Glutathione synthetase ATP-binding domain-like"/>
    <property type="match status" value="1"/>
</dbReference>
<dbReference type="SUPFAM" id="SSF52440">
    <property type="entry name" value="PreATP-grasp domain"/>
    <property type="match status" value="1"/>
</dbReference>
<dbReference type="PROSITE" id="PS50975">
    <property type="entry name" value="ATP_GRASP"/>
    <property type="match status" value="1"/>
</dbReference>
<dbReference type="PROSITE" id="PS00843">
    <property type="entry name" value="DALA_DALA_LIGASE_1"/>
    <property type="match status" value="1"/>
</dbReference>
<dbReference type="PROSITE" id="PS00844">
    <property type="entry name" value="DALA_DALA_LIGASE_2"/>
    <property type="match status" value="1"/>
</dbReference>
<comment type="function">
    <text evidence="2">Cell wall formation.</text>
</comment>
<comment type="catalytic activity">
    <reaction evidence="2">
        <text>2 D-alanine + ATP = D-alanyl-D-alanine + ADP + phosphate + H(+)</text>
        <dbReference type="Rhea" id="RHEA:11224"/>
        <dbReference type="ChEBI" id="CHEBI:15378"/>
        <dbReference type="ChEBI" id="CHEBI:30616"/>
        <dbReference type="ChEBI" id="CHEBI:43474"/>
        <dbReference type="ChEBI" id="CHEBI:57416"/>
        <dbReference type="ChEBI" id="CHEBI:57822"/>
        <dbReference type="ChEBI" id="CHEBI:456216"/>
        <dbReference type="EC" id="6.3.2.4"/>
    </reaction>
</comment>
<comment type="cofactor">
    <cofactor evidence="1">
        <name>Mg(2+)</name>
        <dbReference type="ChEBI" id="CHEBI:18420"/>
    </cofactor>
    <cofactor evidence="1">
        <name>Mn(2+)</name>
        <dbReference type="ChEBI" id="CHEBI:29035"/>
    </cofactor>
    <text evidence="1">Binds 2 magnesium or manganese ions per subunit.</text>
</comment>
<comment type="pathway">
    <text evidence="2">Cell wall biogenesis; peptidoglycan biosynthesis.</text>
</comment>
<comment type="subcellular location">
    <subcellularLocation>
        <location evidence="2">Cytoplasm</location>
    </subcellularLocation>
</comment>
<comment type="similarity">
    <text evidence="2">Belongs to the D-alanine--D-alanine ligase family.</text>
</comment>
<accession>Q83G28</accession>
<feature type="chain" id="PRO_0000177900" description="D-alanine--D-alanine ligase">
    <location>
        <begin position="1"/>
        <end position="347"/>
    </location>
</feature>
<feature type="domain" description="ATP-grasp" evidence="2">
    <location>
        <begin position="138"/>
        <end position="339"/>
    </location>
</feature>
<feature type="binding site" evidence="2">
    <location>
        <begin position="171"/>
        <end position="226"/>
    </location>
    <ligand>
        <name>ATP</name>
        <dbReference type="ChEBI" id="CHEBI:30616"/>
    </ligand>
</feature>
<feature type="binding site" evidence="2">
    <location>
        <position position="296"/>
    </location>
    <ligand>
        <name>Mg(2+)</name>
        <dbReference type="ChEBI" id="CHEBI:18420"/>
        <label>1</label>
    </ligand>
</feature>
<feature type="binding site" evidence="2">
    <location>
        <position position="308"/>
    </location>
    <ligand>
        <name>Mg(2+)</name>
        <dbReference type="ChEBI" id="CHEBI:18420"/>
        <label>1</label>
    </ligand>
</feature>
<feature type="binding site" evidence="2">
    <location>
        <position position="308"/>
    </location>
    <ligand>
        <name>Mg(2+)</name>
        <dbReference type="ChEBI" id="CHEBI:18420"/>
        <label>2</label>
    </ligand>
</feature>
<feature type="binding site" evidence="2">
    <location>
        <position position="310"/>
    </location>
    <ligand>
        <name>Mg(2+)</name>
        <dbReference type="ChEBI" id="CHEBI:18420"/>
        <label>2</label>
    </ligand>
</feature>
<sequence length="347" mass="38729">MRRLLLLFGGRSQEHSVSYASARALLEHICDEWTVIPVGITKHGDFVYCSTVSEQDYGEVIDNGNRVVWPSRAGCKKIEVVQARGKSFFVEFDLVFPLLHGVFGEDGTIQGMLDLLDIPYVGSGVFASAAAMDKHYTKILCSHAGIPVLPWYLIKGHAWHKNRDSFLKQISDRFTFPLFVKPVDAGSSFGCTFVDFFEQLPVAIEHALQHGKSAIVEPALDAPEVFCSLIENNGVLQCSELVFVKHSGSKFYDYSAKYLNPVEFVIPAQFDNTDGYAEIASKVFFELGCRHYARIDFFVTESGLVLNEINTSPGLTQKSIFPSSFKSMQYSQVIETILASAYCQVKR</sequence>
<proteinExistence type="inferred from homology"/>
<protein>
    <recommendedName>
        <fullName evidence="2">D-alanine--D-alanine ligase</fullName>
        <ecNumber evidence="2">6.3.2.4</ecNumber>
    </recommendedName>
    <alternativeName>
        <fullName evidence="2">D-Ala-D-Ala ligase</fullName>
    </alternativeName>
    <alternativeName>
        <fullName evidence="2">D-alanylalanine synthetase</fullName>
    </alternativeName>
</protein>
<gene>
    <name evidence="2" type="primary">ddl</name>
    <name type="synonym">ddlA</name>
    <name type="ordered locus">TWT_505</name>
</gene>
<organism>
    <name type="scientific">Tropheryma whipplei (strain Twist)</name>
    <name type="common">Whipple's bacillus</name>
    <dbReference type="NCBI Taxonomy" id="203267"/>
    <lineage>
        <taxon>Bacteria</taxon>
        <taxon>Bacillati</taxon>
        <taxon>Actinomycetota</taxon>
        <taxon>Actinomycetes</taxon>
        <taxon>Micrococcales</taxon>
        <taxon>Tropherymataceae</taxon>
        <taxon>Tropheryma</taxon>
    </lineage>
</organism>